<feature type="signal peptide" evidence="1">
    <location>
        <begin position="1"/>
        <end position="28"/>
    </location>
</feature>
<feature type="chain" id="PRO_0000016873" description="Tissue factor pathway inhibitor">
    <location>
        <begin position="29"/>
        <end position="306"/>
    </location>
</feature>
<feature type="domain" description="BPTI/Kunitz inhibitor 1" evidence="3">
    <location>
        <begin position="50"/>
        <end position="100"/>
    </location>
</feature>
<feature type="domain" description="BPTI/Kunitz inhibitor 2" evidence="3">
    <location>
        <begin position="121"/>
        <end position="171"/>
    </location>
</feature>
<feature type="domain" description="BPTI/Kunitz inhibitor 3" evidence="3">
    <location>
        <begin position="225"/>
        <end position="275"/>
    </location>
</feature>
<feature type="site" description="Reactive bond" evidence="1">
    <location>
        <begin position="60"/>
        <end position="61"/>
    </location>
</feature>
<feature type="site" description="Reactive bond" evidence="1">
    <location>
        <begin position="131"/>
        <end position="132"/>
    </location>
</feature>
<feature type="site" description="Reactive bond" evidence="1">
    <location>
        <begin position="235"/>
        <end position="236"/>
    </location>
</feature>
<feature type="glycosylation site" description="N-linked (GlcNAc...) asparagine" evidence="2">
    <location>
        <position position="141"/>
    </location>
</feature>
<feature type="glycosylation site" description="N-linked (GlcNAc...) asparagine" evidence="2">
    <location>
        <position position="254"/>
    </location>
</feature>
<feature type="glycosylation site" description="N-linked (GlcNAc...) asparagine" evidence="2">
    <location>
        <position position="264"/>
    </location>
</feature>
<feature type="glycosylation site" description="N-linked (GlcNAc...) asparagine" evidence="2">
    <location>
        <position position="282"/>
    </location>
</feature>
<feature type="disulfide bond" evidence="3">
    <location>
        <begin position="50"/>
        <end position="100"/>
    </location>
</feature>
<feature type="disulfide bond" evidence="3">
    <location>
        <begin position="59"/>
        <end position="83"/>
    </location>
</feature>
<feature type="disulfide bond" evidence="3">
    <location>
        <begin position="75"/>
        <end position="96"/>
    </location>
</feature>
<feature type="disulfide bond" evidence="3">
    <location>
        <begin position="121"/>
        <end position="171"/>
    </location>
</feature>
<feature type="disulfide bond" evidence="3">
    <location>
        <begin position="130"/>
        <end position="154"/>
    </location>
</feature>
<feature type="disulfide bond" evidence="3">
    <location>
        <begin position="146"/>
        <end position="167"/>
    </location>
</feature>
<feature type="disulfide bond" evidence="3">
    <location>
        <begin position="225"/>
        <end position="275"/>
    </location>
</feature>
<feature type="disulfide bond" evidence="3">
    <location>
        <begin position="234"/>
        <end position="258"/>
    </location>
</feature>
<feature type="disulfide bond" evidence="3">
    <location>
        <begin position="250"/>
        <end position="271"/>
    </location>
</feature>
<feature type="splice variant" id="VSP_003032" description="In isoform Beta." evidence="4">
    <original>DYRGRPWCLQPADSGLCKASERRFYYNSATGKCHRF</original>
    <variation>VTKEETNGGWKNADYTYQGFLSSVYIHVLYFVFRIG</variation>
    <location>
        <begin position="218"/>
        <end position="253"/>
    </location>
</feature>
<feature type="splice variant" id="VSP_003033" description="In isoform Beta." evidence="4">
    <location>
        <begin position="254"/>
        <end position="306"/>
    </location>
</feature>
<feature type="sequence conflict" description="In Ref. 2; AAD01586." evidence="5" ref="2">
    <original>F</original>
    <variation>L</variation>
    <location>
        <position position="68"/>
    </location>
</feature>
<evidence type="ECO:0000250" key="1"/>
<evidence type="ECO:0000255" key="2"/>
<evidence type="ECO:0000255" key="3">
    <source>
        <dbReference type="PROSITE-ProRule" id="PRU00031"/>
    </source>
</evidence>
<evidence type="ECO:0000303" key="4">
    <source>
    </source>
</evidence>
<evidence type="ECO:0000305" key="5"/>
<accession>O54819</accession>
<accession>Q9Z2U8</accession>
<reference key="1">
    <citation type="journal article" date="1998" name="Thromb. Haemost.">
        <title>Cloning, expression, and characterization of mouse tissue factor pathway inhibitor (TFPI).</title>
        <authorList>
            <person name="Chang J.-Y."/>
            <person name="Monroe D.M."/>
            <person name="Oliver J.A."/>
            <person name="Liles D.K."/>
            <person name="Roberts H.R."/>
        </authorList>
    </citation>
    <scope>NUCLEOTIDE SEQUENCE [MRNA] (ISOFORM ALPHA)</scope>
    <source>
        <strain>129</strain>
    </source>
</reference>
<reference key="2">
    <citation type="journal article" date="1999" name="Thromb. Haemost.">
        <title>TFPIbeta, a second product from the mouse tissue factor pathway inhibitor (TFPI) gene.</title>
        <authorList>
            <person name="Chang J.-Y."/>
            <person name="Monroe D.M."/>
            <person name="Oliver J.A."/>
            <person name="Roberts H.R."/>
        </authorList>
    </citation>
    <scope>NUCLEOTIDE SEQUENCE [MRNA] (ISOFORM BETA)</scope>
</reference>
<reference key="3">
    <citation type="journal article" date="2005" name="Science">
        <title>The transcriptional landscape of the mammalian genome.</title>
        <authorList>
            <person name="Carninci P."/>
            <person name="Kasukawa T."/>
            <person name="Katayama S."/>
            <person name="Gough J."/>
            <person name="Frith M.C."/>
            <person name="Maeda N."/>
            <person name="Oyama R."/>
            <person name="Ravasi T."/>
            <person name="Lenhard B."/>
            <person name="Wells C."/>
            <person name="Kodzius R."/>
            <person name="Shimokawa K."/>
            <person name="Bajic V.B."/>
            <person name="Brenner S.E."/>
            <person name="Batalov S."/>
            <person name="Forrest A.R."/>
            <person name="Zavolan M."/>
            <person name="Davis M.J."/>
            <person name="Wilming L.G."/>
            <person name="Aidinis V."/>
            <person name="Allen J.E."/>
            <person name="Ambesi-Impiombato A."/>
            <person name="Apweiler R."/>
            <person name="Aturaliya R.N."/>
            <person name="Bailey T.L."/>
            <person name="Bansal M."/>
            <person name="Baxter L."/>
            <person name="Beisel K.W."/>
            <person name="Bersano T."/>
            <person name="Bono H."/>
            <person name="Chalk A.M."/>
            <person name="Chiu K.P."/>
            <person name="Choudhary V."/>
            <person name="Christoffels A."/>
            <person name="Clutterbuck D.R."/>
            <person name="Crowe M.L."/>
            <person name="Dalla E."/>
            <person name="Dalrymple B.P."/>
            <person name="de Bono B."/>
            <person name="Della Gatta G."/>
            <person name="di Bernardo D."/>
            <person name="Down T."/>
            <person name="Engstrom P."/>
            <person name="Fagiolini M."/>
            <person name="Faulkner G."/>
            <person name="Fletcher C.F."/>
            <person name="Fukushima T."/>
            <person name="Furuno M."/>
            <person name="Futaki S."/>
            <person name="Gariboldi M."/>
            <person name="Georgii-Hemming P."/>
            <person name="Gingeras T.R."/>
            <person name="Gojobori T."/>
            <person name="Green R.E."/>
            <person name="Gustincich S."/>
            <person name="Harbers M."/>
            <person name="Hayashi Y."/>
            <person name="Hensch T.K."/>
            <person name="Hirokawa N."/>
            <person name="Hill D."/>
            <person name="Huminiecki L."/>
            <person name="Iacono M."/>
            <person name="Ikeo K."/>
            <person name="Iwama A."/>
            <person name="Ishikawa T."/>
            <person name="Jakt M."/>
            <person name="Kanapin A."/>
            <person name="Katoh M."/>
            <person name="Kawasawa Y."/>
            <person name="Kelso J."/>
            <person name="Kitamura H."/>
            <person name="Kitano H."/>
            <person name="Kollias G."/>
            <person name="Krishnan S.P."/>
            <person name="Kruger A."/>
            <person name="Kummerfeld S.K."/>
            <person name="Kurochkin I.V."/>
            <person name="Lareau L.F."/>
            <person name="Lazarevic D."/>
            <person name="Lipovich L."/>
            <person name="Liu J."/>
            <person name="Liuni S."/>
            <person name="McWilliam S."/>
            <person name="Madan Babu M."/>
            <person name="Madera M."/>
            <person name="Marchionni L."/>
            <person name="Matsuda H."/>
            <person name="Matsuzawa S."/>
            <person name="Miki H."/>
            <person name="Mignone F."/>
            <person name="Miyake S."/>
            <person name="Morris K."/>
            <person name="Mottagui-Tabar S."/>
            <person name="Mulder N."/>
            <person name="Nakano N."/>
            <person name="Nakauchi H."/>
            <person name="Ng P."/>
            <person name="Nilsson R."/>
            <person name="Nishiguchi S."/>
            <person name="Nishikawa S."/>
            <person name="Nori F."/>
            <person name="Ohara O."/>
            <person name="Okazaki Y."/>
            <person name="Orlando V."/>
            <person name="Pang K.C."/>
            <person name="Pavan W.J."/>
            <person name="Pavesi G."/>
            <person name="Pesole G."/>
            <person name="Petrovsky N."/>
            <person name="Piazza S."/>
            <person name="Reed J."/>
            <person name="Reid J.F."/>
            <person name="Ring B.Z."/>
            <person name="Ringwald M."/>
            <person name="Rost B."/>
            <person name="Ruan Y."/>
            <person name="Salzberg S.L."/>
            <person name="Sandelin A."/>
            <person name="Schneider C."/>
            <person name="Schoenbach C."/>
            <person name="Sekiguchi K."/>
            <person name="Semple C.A."/>
            <person name="Seno S."/>
            <person name="Sessa L."/>
            <person name="Sheng Y."/>
            <person name="Shibata Y."/>
            <person name="Shimada H."/>
            <person name="Shimada K."/>
            <person name="Silva D."/>
            <person name="Sinclair B."/>
            <person name="Sperling S."/>
            <person name="Stupka E."/>
            <person name="Sugiura K."/>
            <person name="Sultana R."/>
            <person name="Takenaka Y."/>
            <person name="Taki K."/>
            <person name="Tammoja K."/>
            <person name="Tan S.L."/>
            <person name="Tang S."/>
            <person name="Taylor M.S."/>
            <person name="Tegner J."/>
            <person name="Teichmann S.A."/>
            <person name="Ueda H.R."/>
            <person name="van Nimwegen E."/>
            <person name="Verardo R."/>
            <person name="Wei C.L."/>
            <person name="Yagi K."/>
            <person name="Yamanishi H."/>
            <person name="Zabarovsky E."/>
            <person name="Zhu S."/>
            <person name="Zimmer A."/>
            <person name="Hide W."/>
            <person name="Bult C."/>
            <person name="Grimmond S.M."/>
            <person name="Teasdale R.D."/>
            <person name="Liu E.T."/>
            <person name="Brusic V."/>
            <person name="Quackenbush J."/>
            <person name="Wahlestedt C."/>
            <person name="Mattick J.S."/>
            <person name="Hume D.A."/>
            <person name="Kai C."/>
            <person name="Sasaki D."/>
            <person name="Tomaru Y."/>
            <person name="Fukuda S."/>
            <person name="Kanamori-Katayama M."/>
            <person name="Suzuki M."/>
            <person name="Aoki J."/>
            <person name="Arakawa T."/>
            <person name="Iida J."/>
            <person name="Imamura K."/>
            <person name="Itoh M."/>
            <person name="Kato T."/>
            <person name="Kawaji H."/>
            <person name="Kawagashira N."/>
            <person name="Kawashima T."/>
            <person name="Kojima M."/>
            <person name="Kondo S."/>
            <person name="Konno H."/>
            <person name="Nakano K."/>
            <person name="Ninomiya N."/>
            <person name="Nishio T."/>
            <person name="Okada M."/>
            <person name="Plessy C."/>
            <person name="Shibata K."/>
            <person name="Shiraki T."/>
            <person name="Suzuki S."/>
            <person name="Tagami M."/>
            <person name="Waki K."/>
            <person name="Watahiki A."/>
            <person name="Okamura-Oho Y."/>
            <person name="Suzuki H."/>
            <person name="Kawai J."/>
            <person name="Hayashizaki Y."/>
        </authorList>
    </citation>
    <scope>NUCLEOTIDE SEQUENCE [LARGE SCALE MRNA] (ISOFORM ALPHA)</scope>
    <source>
        <strain>C57BL/6J</strain>
        <tissue>Placenta</tissue>
    </source>
</reference>
<comment type="function">
    <text evidence="1">Inhibits factor X (X(a)) directly and, in a Xa-dependent way, inhibits VIIa/tissue factor activity, presumably by forming a quaternary Xa/LACI/VIIa/TF complex. It possesses an antithrombotic action and also the ability to associate with lipoproteins in plasma (By similarity).</text>
</comment>
<comment type="subcellular location">
    <subcellularLocation>
        <location>Secreted</location>
    </subcellularLocation>
</comment>
<comment type="alternative products">
    <event type="alternative splicing"/>
    <isoform>
        <id>O54819-1</id>
        <name>Alpha</name>
        <name>TFPIalpha</name>
        <sequence type="displayed"/>
    </isoform>
    <isoform>
        <id>O54819-2</id>
        <name>Beta</name>
        <name>TFPIbeta</name>
        <sequence type="described" ref="VSP_003032 VSP_003033"/>
    </isoform>
</comment>
<comment type="tissue specificity">
    <text>Isoform alpha is expressed in heart and spleen; isoform beta in heart and lung.</text>
</comment>
<comment type="domain">
    <text evidence="1">This inhibitor contains three inhibitory domains. The first domain interacts with VIIa and TF, the second one with Xa (By similarity).</text>
</comment>
<name>TFPI1_MOUSE</name>
<keyword id="KW-0025">Alternative splicing</keyword>
<keyword id="KW-0094">Blood coagulation</keyword>
<keyword id="KW-1015">Disulfide bond</keyword>
<keyword id="KW-0325">Glycoprotein</keyword>
<keyword id="KW-0356">Hemostasis</keyword>
<keyword id="KW-0646">Protease inhibitor</keyword>
<keyword id="KW-1185">Reference proteome</keyword>
<keyword id="KW-0677">Repeat</keyword>
<keyword id="KW-0964">Secreted</keyword>
<keyword id="KW-0722">Serine protease inhibitor</keyword>
<keyword id="KW-0732">Signal</keyword>
<organism>
    <name type="scientific">Mus musculus</name>
    <name type="common">Mouse</name>
    <dbReference type="NCBI Taxonomy" id="10090"/>
    <lineage>
        <taxon>Eukaryota</taxon>
        <taxon>Metazoa</taxon>
        <taxon>Chordata</taxon>
        <taxon>Craniata</taxon>
        <taxon>Vertebrata</taxon>
        <taxon>Euteleostomi</taxon>
        <taxon>Mammalia</taxon>
        <taxon>Eutheria</taxon>
        <taxon>Euarchontoglires</taxon>
        <taxon>Glires</taxon>
        <taxon>Rodentia</taxon>
        <taxon>Myomorpha</taxon>
        <taxon>Muroidea</taxon>
        <taxon>Muridae</taxon>
        <taxon>Murinae</taxon>
        <taxon>Mus</taxon>
        <taxon>Mus</taxon>
    </lineage>
</organism>
<gene>
    <name type="primary">Tfpi</name>
</gene>
<dbReference type="EMBL" id="AF004833">
    <property type="protein sequence ID" value="AAC40035.1"/>
    <property type="molecule type" value="mRNA"/>
</dbReference>
<dbReference type="EMBL" id="AF016313">
    <property type="protein sequence ID" value="AAD01586.1"/>
    <property type="molecule type" value="mRNA"/>
</dbReference>
<dbReference type="EMBL" id="AK028356">
    <property type="protein sequence ID" value="BAC25901.1"/>
    <property type="molecule type" value="mRNA"/>
</dbReference>
<dbReference type="CCDS" id="CCDS16185.1">
    <molecule id="O54819-1"/>
</dbReference>
<dbReference type="RefSeq" id="NP_001342200.1">
    <molecule id="O54819-1"/>
    <property type="nucleotide sequence ID" value="NM_001355271.1"/>
</dbReference>
<dbReference type="RefSeq" id="NP_001342202.1">
    <molecule id="O54819-1"/>
    <property type="nucleotide sequence ID" value="NM_001355273.1"/>
</dbReference>
<dbReference type="RefSeq" id="NP_035706.1">
    <molecule id="O54819-1"/>
    <property type="nucleotide sequence ID" value="NM_011576.1"/>
</dbReference>
<dbReference type="RefSeq" id="XP_006499208.1">
    <molecule id="O54819-1"/>
    <property type="nucleotide sequence ID" value="XM_006499145.3"/>
</dbReference>
<dbReference type="RefSeq" id="XP_006499209.1">
    <property type="nucleotide sequence ID" value="XM_006499146.3"/>
</dbReference>
<dbReference type="RefSeq" id="XP_006499210.1">
    <property type="nucleotide sequence ID" value="XM_006499147.3"/>
</dbReference>
<dbReference type="RefSeq" id="XP_006499211.1">
    <property type="nucleotide sequence ID" value="XM_006499148.3"/>
</dbReference>
<dbReference type="RefSeq" id="XP_006499212.1">
    <molecule id="O54819-2"/>
    <property type="nucleotide sequence ID" value="XM_006499149.5"/>
</dbReference>
<dbReference type="RefSeq" id="XP_030105252.1">
    <molecule id="O54819-1"/>
    <property type="nucleotide sequence ID" value="XM_030249392.2"/>
</dbReference>
<dbReference type="RefSeq" id="XP_030105255.1">
    <molecule id="O54819-1"/>
    <property type="nucleotide sequence ID" value="XM_030249395.1"/>
</dbReference>
<dbReference type="RefSeq" id="XP_036016320.1">
    <molecule id="O54819-1"/>
    <property type="nucleotide sequence ID" value="XM_036160427.1"/>
</dbReference>
<dbReference type="RefSeq" id="XP_036016321.1">
    <molecule id="O54819-1"/>
    <property type="nucleotide sequence ID" value="XM_036160428.1"/>
</dbReference>
<dbReference type="SMR" id="O54819"/>
<dbReference type="FunCoup" id="O54819">
    <property type="interactions" value="46"/>
</dbReference>
<dbReference type="STRING" id="10090.ENSMUSP00000107347"/>
<dbReference type="ChEMBL" id="CHEMBL4523142"/>
<dbReference type="MEROPS" id="I02.011"/>
<dbReference type="GlyCosmos" id="O54819">
    <property type="glycosylation" value="4 sites, No reported glycans"/>
</dbReference>
<dbReference type="GlyGen" id="O54819">
    <property type="glycosylation" value="4 sites, 1 N-linked glycan (1 site)"/>
</dbReference>
<dbReference type="iPTMnet" id="O54819"/>
<dbReference type="PhosphoSitePlus" id="O54819"/>
<dbReference type="CPTAC" id="non-CPTAC-4064"/>
<dbReference type="PaxDb" id="10090-ENSMUSP00000107347"/>
<dbReference type="PeptideAtlas" id="O54819"/>
<dbReference type="ProteomicsDB" id="262802">
    <molecule id="O54819-1"/>
</dbReference>
<dbReference type="ProteomicsDB" id="262803">
    <molecule id="O54819-2"/>
</dbReference>
<dbReference type="ABCD" id="O54819">
    <property type="antibodies" value="14 sequenced antibodies"/>
</dbReference>
<dbReference type="Antibodypedia" id="790">
    <property type="antibodies" value="1144 antibodies from 41 providers"/>
</dbReference>
<dbReference type="DNASU" id="21788"/>
<dbReference type="Ensembl" id="ENSMUST00000028487.10">
    <molecule id="O54819-1"/>
    <property type="protein sequence ID" value="ENSMUSP00000028487.4"/>
    <property type="gene ID" value="ENSMUSG00000027082.16"/>
</dbReference>
<dbReference type="Ensembl" id="ENSMUST00000111718.8">
    <molecule id="O54819-1"/>
    <property type="protein sequence ID" value="ENSMUSP00000107347.2"/>
    <property type="gene ID" value="ENSMUSG00000027082.16"/>
</dbReference>
<dbReference type="GeneID" id="21788"/>
<dbReference type="KEGG" id="mmu:21788"/>
<dbReference type="UCSC" id="uc008kij.1">
    <molecule id="O54819-1"/>
    <property type="organism name" value="mouse"/>
</dbReference>
<dbReference type="UCSC" id="uc008kim.1">
    <molecule id="O54819-2"/>
    <property type="organism name" value="mouse"/>
</dbReference>
<dbReference type="AGR" id="MGI:1095418"/>
<dbReference type="CTD" id="7035"/>
<dbReference type="MGI" id="MGI:1095418">
    <property type="gene designation" value="Tfpi"/>
</dbReference>
<dbReference type="VEuPathDB" id="HostDB:ENSMUSG00000027082"/>
<dbReference type="eggNOG" id="KOG4295">
    <property type="taxonomic scope" value="Eukaryota"/>
</dbReference>
<dbReference type="GeneTree" id="ENSGT00940000160767"/>
<dbReference type="HOGENOM" id="CLU_058441_2_0_1"/>
<dbReference type="InParanoid" id="O54819"/>
<dbReference type="OMA" id="WWILCAV"/>
<dbReference type="OrthoDB" id="5950222at2759"/>
<dbReference type="PhylomeDB" id="O54819"/>
<dbReference type="TreeFam" id="TF315349"/>
<dbReference type="Reactome" id="R-MMU-140834">
    <property type="pathway name" value="Extrinsic Pathway of Fibrin Clot Formation"/>
</dbReference>
<dbReference type="BioGRID-ORCS" id="21788">
    <property type="hits" value="3 hits in 79 CRISPR screens"/>
</dbReference>
<dbReference type="ChiTaRS" id="Tfpi">
    <property type="organism name" value="mouse"/>
</dbReference>
<dbReference type="PRO" id="PR:O54819"/>
<dbReference type="Proteomes" id="UP000000589">
    <property type="component" value="Chromosome 2"/>
</dbReference>
<dbReference type="RNAct" id="O54819">
    <property type="molecule type" value="protein"/>
</dbReference>
<dbReference type="Bgee" id="ENSMUSG00000027082">
    <property type="expression patterns" value="Expressed in gastrula and 240 other cell types or tissues"/>
</dbReference>
<dbReference type="ExpressionAtlas" id="O54819">
    <property type="expression patterns" value="baseline and differential"/>
</dbReference>
<dbReference type="GO" id="GO:0005901">
    <property type="term" value="C:caveola"/>
    <property type="evidence" value="ECO:0007669"/>
    <property type="project" value="Ensembl"/>
</dbReference>
<dbReference type="GO" id="GO:0009986">
    <property type="term" value="C:cell surface"/>
    <property type="evidence" value="ECO:0007669"/>
    <property type="project" value="Ensembl"/>
</dbReference>
<dbReference type="GO" id="GO:0005615">
    <property type="term" value="C:extracellular space"/>
    <property type="evidence" value="ECO:0007005"/>
    <property type="project" value="BHF-UCL"/>
</dbReference>
<dbReference type="GO" id="GO:0004867">
    <property type="term" value="F:serine-type endopeptidase inhibitor activity"/>
    <property type="evidence" value="ECO:0007669"/>
    <property type="project" value="UniProtKB-KW"/>
</dbReference>
<dbReference type="GO" id="GO:0007596">
    <property type="term" value="P:blood coagulation"/>
    <property type="evidence" value="ECO:0007669"/>
    <property type="project" value="UniProtKB-KW"/>
</dbReference>
<dbReference type="GO" id="GO:0071383">
    <property type="term" value="P:cellular response to steroid hormone stimulus"/>
    <property type="evidence" value="ECO:0007669"/>
    <property type="project" value="Ensembl"/>
</dbReference>
<dbReference type="GO" id="GO:0030195">
    <property type="term" value="P:negative regulation of blood coagulation"/>
    <property type="evidence" value="ECO:0007669"/>
    <property type="project" value="Ensembl"/>
</dbReference>
<dbReference type="CDD" id="cd22613">
    <property type="entry name" value="Kunitz_TFPI1_1-like"/>
    <property type="match status" value="1"/>
</dbReference>
<dbReference type="CDD" id="cd22614">
    <property type="entry name" value="Kunitz_TFPI1_2-like"/>
    <property type="match status" value="1"/>
</dbReference>
<dbReference type="CDD" id="cd22615">
    <property type="entry name" value="Kunitz_TFPI1_TFPI2_3-like"/>
    <property type="match status" value="1"/>
</dbReference>
<dbReference type="FunFam" id="4.10.410.10:FF:000004">
    <property type="entry name" value="Tissue factor pathway inhibitor"/>
    <property type="match status" value="1"/>
</dbReference>
<dbReference type="FunFam" id="4.10.410.10:FF:000012">
    <property type="entry name" value="Tissue factor pathway inhibitor"/>
    <property type="match status" value="1"/>
</dbReference>
<dbReference type="Gene3D" id="4.10.410.10">
    <property type="entry name" value="Pancreatic trypsin inhibitor Kunitz domain"/>
    <property type="match status" value="3"/>
</dbReference>
<dbReference type="InterPro" id="IPR002223">
    <property type="entry name" value="Kunitz_BPTI"/>
</dbReference>
<dbReference type="InterPro" id="IPR036880">
    <property type="entry name" value="Kunitz_BPTI_sf"/>
</dbReference>
<dbReference type="InterPro" id="IPR020901">
    <property type="entry name" value="Prtase_inh_Kunz-CS"/>
</dbReference>
<dbReference type="InterPro" id="IPR008296">
    <property type="entry name" value="TFPI-like"/>
</dbReference>
<dbReference type="InterPro" id="IPR050098">
    <property type="entry name" value="TFPI/VKTCI-like"/>
</dbReference>
<dbReference type="PANTHER" id="PTHR10083:SF217">
    <property type="entry name" value="BOOPHILIN-H2"/>
    <property type="match status" value="1"/>
</dbReference>
<dbReference type="PANTHER" id="PTHR10083">
    <property type="entry name" value="KUNITZ-TYPE PROTEASE INHIBITOR-RELATED"/>
    <property type="match status" value="1"/>
</dbReference>
<dbReference type="Pfam" id="PF00014">
    <property type="entry name" value="Kunitz_BPTI"/>
    <property type="match status" value="3"/>
</dbReference>
<dbReference type="PIRSF" id="PIRSF001620">
    <property type="entry name" value="TFPI"/>
    <property type="match status" value="1"/>
</dbReference>
<dbReference type="PRINTS" id="PR00759">
    <property type="entry name" value="BASICPTASE"/>
</dbReference>
<dbReference type="SMART" id="SM00131">
    <property type="entry name" value="KU"/>
    <property type="match status" value="3"/>
</dbReference>
<dbReference type="SUPFAM" id="SSF57362">
    <property type="entry name" value="BPTI-like"/>
    <property type="match status" value="3"/>
</dbReference>
<dbReference type="PROSITE" id="PS00280">
    <property type="entry name" value="BPTI_KUNITZ_1"/>
    <property type="match status" value="3"/>
</dbReference>
<dbReference type="PROSITE" id="PS50279">
    <property type="entry name" value="BPTI_KUNITZ_2"/>
    <property type="match status" value="3"/>
</dbReference>
<sequence>MTYKMKKEYAFWATVCLLLSLVPEFLNALSEEADDTDSELGSMKPLHTFCAMKADDGPCKAMIRSYFFNMYTHQCEEFIYGGCEGNENRFDTLEECKKTCIPGYEKTAVKAASGAERPDFCFLEEDPGLCRGYMKRYLYNNQTKQCERFVYGGCLGNRNNFETLDECKKICENPVHSPSPVNEVQMSDYVTDGNTVTDRSTVNNIVVPQSPKVPRRRDYRGRPWCLQPADSGLCKASERRFYYNSATGKCHRFNYTGCGGNNNNFTTRRRCLRSCKTGLIKNKSKGVVKIQRRKAPFVKVVYESIN</sequence>
<proteinExistence type="evidence at transcript level"/>
<protein>
    <recommendedName>
        <fullName>Tissue factor pathway inhibitor</fullName>
        <shortName>TFPI</shortName>
    </recommendedName>
    <alternativeName>
        <fullName>Extrinsic pathway inhibitor</fullName>
        <shortName>EPI</shortName>
    </alternativeName>
    <alternativeName>
        <fullName>Lipoprotein-associated coagulation inhibitor</fullName>
        <shortName>LACI</shortName>
    </alternativeName>
</protein>